<gene>
    <name type="primary">IAA13</name>
    <name type="synonym">IAA1</name>
    <name type="ordered locus">Os03g0742900</name>
    <name type="ordered locus">LOC_Os03g53150</name>
    <name type="ORF">OJ1365_D05.5</name>
    <name type="ORF">OsJ_012025</name>
</gene>
<organism>
    <name type="scientific">Oryza sativa subsp. japonica</name>
    <name type="common">Rice</name>
    <dbReference type="NCBI Taxonomy" id="39947"/>
    <lineage>
        <taxon>Eukaryota</taxon>
        <taxon>Viridiplantae</taxon>
        <taxon>Streptophyta</taxon>
        <taxon>Embryophyta</taxon>
        <taxon>Tracheophyta</taxon>
        <taxon>Spermatophyta</taxon>
        <taxon>Magnoliopsida</taxon>
        <taxon>Liliopsida</taxon>
        <taxon>Poales</taxon>
        <taxon>Poaceae</taxon>
        <taxon>BOP clade</taxon>
        <taxon>Oryzoideae</taxon>
        <taxon>Oryzeae</taxon>
        <taxon>Oryzinae</taxon>
        <taxon>Oryza</taxon>
        <taxon>Oryza sativa</taxon>
    </lineage>
</organism>
<dbReference type="EMBL" id="AC096855">
    <property type="protein sequence ID" value="AAR87294.1"/>
    <property type="molecule type" value="Genomic_DNA"/>
</dbReference>
<dbReference type="EMBL" id="AC096855">
    <property type="protein sequence ID" value="AAR87295.1"/>
    <property type="status" value="ALT_SEQ"/>
    <property type="molecule type" value="Genomic_DNA"/>
</dbReference>
<dbReference type="EMBL" id="DP000009">
    <property type="protein sequence ID" value="ABF98810.1"/>
    <property type="molecule type" value="Genomic_DNA"/>
</dbReference>
<dbReference type="EMBL" id="AP008209">
    <property type="protein sequence ID" value="BAF13144.1"/>
    <property type="molecule type" value="Genomic_DNA"/>
</dbReference>
<dbReference type="EMBL" id="AP014959">
    <property type="protein sequence ID" value="BAS86321.1"/>
    <property type="molecule type" value="Genomic_DNA"/>
</dbReference>
<dbReference type="EMBL" id="CM000140">
    <property type="protein sequence ID" value="EAZ28542.1"/>
    <property type="molecule type" value="Genomic_DNA"/>
</dbReference>
<dbReference type="EMBL" id="AK059838">
    <property type="protein sequence ID" value="BAG87160.1"/>
    <property type="molecule type" value="mRNA"/>
</dbReference>
<dbReference type="RefSeq" id="XP_015631444.1">
    <property type="nucleotide sequence ID" value="XM_015775958.1"/>
</dbReference>
<dbReference type="SMR" id="Q10D34"/>
<dbReference type="FunCoup" id="Q10D34">
    <property type="interactions" value="359"/>
</dbReference>
<dbReference type="IntAct" id="Q10D34">
    <property type="interactions" value="1"/>
</dbReference>
<dbReference type="STRING" id="39947.Q10D34"/>
<dbReference type="PaxDb" id="39947-Q10D34"/>
<dbReference type="EnsemblPlants" id="Os03t0742900-01">
    <property type="protein sequence ID" value="Os03t0742900-01"/>
    <property type="gene ID" value="Os03g0742900"/>
</dbReference>
<dbReference type="Gramene" id="Os03t0742900-01">
    <property type="protein sequence ID" value="Os03t0742900-01"/>
    <property type="gene ID" value="Os03g0742900"/>
</dbReference>
<dbReference type="KEGG" id="dosa:Os03g0742900"/>
<dbReference type="eggNOG" id="ENOG502QPNB">
    <property type="taxonomic scope" value="Eukaryota"/>
</dbReference>
<dbReference type="HOGENOM" id="CLU_049393_1_5_1"/>
<dbReference type="InParanoid" id="Q10D34"/>
<dbReference type="OMA" id="IALHKMF"/>
<dbReference type="OrthoDB" id="642974at2759"/>
<dbReference type="PlantReactome" id="R-OSA-5608118">
    <property type="pathway name" value="Auxin signalling"/>
</dbReference>
<dbReference type="PlantReactome" id="R-OSA-9030557">
    <property type="pathway name" value="Lateral root initiation"/>
</dbReference>
<dbReference type="PlantReactome" id="R-OSA-9030654">
    <property type="pathway name" value="Primary root development"/>
</dbReference>
<dbReference type="Proteomes" id="UP000000763">
    <property type="component" value="Chromosome 3"/>
</dbReference>
<dbReference type="Proteomes" id="UP000007752">
    <property type="component" value="Chromosome 3"/>
</dbReference>
<dbReference type="Proteomes" id="UP000059680">
    <property type="component" value="Chromosome 3"/>
</dbReference>
<dbReference type="ExpressionAtlas" id="Q10D34">
    <property type="expression patterns" value="baseline and differential"/>
</dbReference>
<dbReference type="GO" id="GO:0005634">
    <property type="term" value="C:nucleus"/>
    <property type="evidence" value="ECO:0007669"/>
    <property type="project" value="UniProtKB-SubCell"/>
</dbReference>
<dbReference type="GO" id="GO:0009734">
    <property type="term" value="P:auxin-activated signaling pathway"/>
    <property type="evidence" value="ECO:0007669"/>
    <property type="project" value="UniProtKB-KW"/>
</dbReference>
<dbReference type="GO" id="GO:0006355">
    <property type="term" value="P:regulation of DNA-templated transcription"/>
    <property type="evidence" value="ECO:0007669"/>
    <property type="project" value="InterPro"/>
</dbReference>
<dbReference type="FunFam" id="3.10.20.90:FF:000078">
    <property type="entry name" value="Auxin-responsive protein"/>
    <property type="match status" value="1"/>
</dbReference>
<dbReference type="Gene3D" id="3.10.20.90">
    <property type="entry name" value="Phosphatidylinositol 3-kinase Catalytic Subunit, Chain A, domain 1"/>
    <property type="match status" value="1"/>
</dbReference>
<dbReference type="InterPro" id="IPR033389">
    <property type="entry name" value="AUX/IAA_dom"/>
</dbReference>
<dbReference type="InterPro" id="IPR003311">
    <property type="entry name" value="AUX_IAA"/>
</dbReference>
<dbReference type="InterPro" id="IPR053793">
    <property type="entry name" value="PB1-like"/>
</dbReference>
<dbReference type="PANTHER" id="PTHR31734:SF28">
    <property type="entry name" value="AUXIN-RESPONSIVE PROTEIN IAA13"/>
    <property type="match status" value="1"/>
</dbReference>
<dbReference type="PANTHER" id="PTHR31734">
    <property type="entry name" value="AUXIN-RESPONSIVE PROTEIN IAA17"/>
    <property type="match status" value="1"/>
</dbReference>
<dbReference type="Pfam" id="PF02309">
    <property type="entry name" value="AUX_IAA"/>
    <property type="match status" value="1"/>
</dbReference>
<dbReference type="SUPFAM" id="SSF54277">
    <property type="entry name" value="CAD &amp; PB1 domains"/>
    <property type="match status" value="1"/>
</dbReference>
<dbReference type="PROSITE" id="PS51745">
    <property type="entry name" value="PB1"/>
    <property type="match status" value="1"/>
</dbReference>
<keyword id="KW-0927">Auxin signaling pathway</keyword>
<keyword id="KW-0539">Nucleus</keyword>
<keyword id="KW-1185">Reference proteome</keyword>
<keyword id="KW-0678">Repressor</keyword>
<keyword id="KW-0804">Transcription</keyword>
<keyword id="KW-0805">Transcription regulation</keyword>
<feature type="chain" id="PRO_0000223212" description="Auxin-responsive protein IAA13">
    <location>
        <begin position="1"/>
        <end position="236"/>
    </location>
</feature>
<feature type="domain" description="PB1" evidence="2">
    <location>
        <begin position="131"/>
        <end position="218"/>
    </location>
</feature>
<feature type="region of interest" description="Disordered" evidence="3">
    <location>
        <begin position="1"/>
        <end position="24"/>
    </location>
</feature>
<feature type="region of interest" description="Disordered" evidence="3">
    <location>
        <begin position="52"/>
        <end position="93"/>
    </location>
</feature>
<feature type="region of interest" description="Disordered" evidence="3">
    <location>
        <begin position="105"/>
        <end position="130"/>
    </location>
</feature>
<feature type="short sequence motif" description="EAR-like (transcriptional repression)" evidence="1">
    <location>
        <begin position="12"/>
        <end position="16"/>
    </location>
</feature>
<feature type="compositionally biased region" description="Low complexity" evidence="3">
    <location>
        <begin position="52"/>
        <end position="61"/>
    </location>
</feature>
<feature type="compositionally biased region" description="Basic and acidic residues" evidence="3">
    <location>
        <begin position="62"/>
        <end position="81"/>
    </location>
</feature>
<feature type="compositionally biased region" description="Low complexity" evidence="3">
    <location>
        <begin position="117"/>
        <end position="130"/>
    </location>
</feature>
<sequence>MAGADVDVGTELRLGLPGGGGGAAEAAAKAAKRGFEETIDLKLKLPTAGMEEAAAGKAEAPAAEKAKRPAEAAAADAEKPPAPKAQAVGWPPVRSFRRNIMTVQSVKSKKEEEADKQQQQPAANASGSNSSAFVKVSMDGAPYLRKVDLKMYNSYKDLSLALQKMFGTFTATGNNMNEVNGSDAVTTYEDKDGDWMLVGDVPWQMFVESCKRLRIMKGSEAIGLAPRAKDKYKNKS</sequence>
<proteinExistence type="evidence at transcript level"/>
<evidence type="ECO:0000250" key="1"/>
<evidence type="ECO:0000255" key="2">
    <source>
        <dbReference type="PROSITE-ProRule" id="PRU01081"/>
    </source>
</evidence>
<evidence type="ECO:0000256" key="3">
    <source>
        <dbReference type="SAM" id="MobiDB-lite"/>
    </source>
</evidence>
<evidence type="ECO:0000305" key="4"/>
<accession>Q10D34</accession>
<accession>B7E463</accession>
<accession>Q75KX2</accession>
<accession>Q75KX3</accession>
<accession>Q7Y1Y5</accession>
<accession>Q8VWE7</accession>
<protein>
    <recommendedName>
        <fullName>Auxin-responsive protein IAA13</fullName>
    </recommendedName>
    <alternativeName>
        <fullName>Indoleacetic acid-induced protein 13</fullName>
    </alternativeName>
</protein>
<name>IAA13_ORYSJ</name>
<comment type="function">
    <text evidence="1">Aux/IAA proteins are short-lived transcriptional factors that function as repressors of early auxin response genes at low auxin concentrations.</text>
</comment>
<comment type="subunit">
    <text evidence="1">Homodimers and heterodimers.</text>
</comment>
<comment type="subcellular location">
    <subcellularLocation>
        <location evidence="1">Nucleus</location>
    </subcellularLocation>
</comment>
<comment type="similarity">
    <text evidence="4">Belongs to the Aux/IAA family.</text>
</comment>
<comment type="sequence caution" evidence="4">
    <conflict type="erroneous gene model prediction">
        <sequence resource="EMBL-CDS" id="AAR87295"/>
    </conflict>
</comment>
<reference key="1">
    <citation type="journal article" date="2005" name="Genome Res.">
        <title>Sequence, annotation, and analysis of synteny between rice chromosome 3 and diverged grass species.</title>
        <authorList>
            <consortium name="The rice chromosome 3 sequencing consortium"/>
            <person name="Buell C.R."/>
            <person name="Yuan Q."/>
            <person name="Ouyang S."/>
            <person name="Liu J."/>
            <person name="Zhu W."/>
            <person name="Wang A."/>
            <person name="Maiti R."/>
            <person name="Haas B."/>
            <person name="Wortman J."/>
            <person name="Pertea M."/>
            <person name="Jones K.M."/>
            <person name="Kim M."/>
            <person name="Overton L."/>
            <person name="Tsitrin T."/>
            <person name="Fadrosh D."/>
            <person name="Bera J."/>
            <person name="Weaver B."/>
            <person name="Jin S."/>
            <person name="Johri S."/>
            <person name="Reardon M."/>
            <person name="Webb K."/>
            <person name="Hill J."/>
            <person name="Moffat K."/>
            <person name="Tallon L."/>
            <person name="Van Aken S."/>
            <person name="Lewis M."/>
            <person name="Utterback T."/>
            <person name="Feldblyum T."/>
            <person name="Zismann V."/>
            <person name="Iobst S."/>
            <person name="Hsiao J."/>
            <person name="de Vazeille A.R."/>
            <person name="Salzberg S.L."/>
            <person name="White O."/>
            <person name="Fraser C.M."/>
            <person name="Yu Y."/>
            <person name="Kim H."/>
            <person name="Rambo T."/>
            <person name="Currie J."/>
            <person name="Collura K."/>
            <person name="Kernodle-Thompson S."/>
            <person name="Wei F."/>
            <person name="Kudrna K."/>
            <person name="Ammiraju J.S.S."/>
            <person name="Luo M."/>
            <person name="Goicoechea J.L."/>
            <person name="Wing R.A."/>
            <person name="Henry D."/>
            <person name="Oates R."/>
            <person name="Palmer M."/>
            <person name="Pries G."/>
            <person name="Saski C."/>
            <person name="Simmons J."/>
            <person name="Soderlund C."/>
            <person name="Nelson W."/>
            <person name="de la Bastide M."/>
            <person name="Spiegel L."/>
            <person name="Nascimento L."/>
            <person name="Huang E."/>
            <person name="Preston R."/>
            <person name="Zutavern T."/>
            <person name="Palmer L."/>
            <person name="O'Shaughnessy A."/>
            <person name="Dike S."/>
            <person name="McCombie W.R."/>
            <person name="Minx P."/>
            <person name="Cordum H."/>
            <person name="Wilson R."/>
            <person name="Jin W."/>
            <person name="Lee H.R."/>
            <person name="Jiang J."/>
            <person name="Jackson S."/>
        </authorList>
    </citation>
    <scope>NUCLEOTIDE SEQUENCE [LARGE SCALE GENOMIC DNA]</scope>
    <source>
        <strain>cv. Nipponbare</strain>
    </source>
</reference>
<reference key="2">
    <citation type="journal article" date="2005" name="Nature">
        <title>The map-based sequence of the rice genome.</title>
        <authorList>
            <consortium name="International rice genome sequencing project (IRGSP)"/>
        </authorList>
    </citation>
    <scope>NUCLEOTIDE SEQUENCE [LARGE SCALE GENOMIC DNA]</scope>
    <source>
        <strain>cv. Nipponbare</strain>
    </source>
</reference>
<reference key="3">
    <citation type="journal article" date="2008" name="Nucleic Acids Res.">
        <title>The rice annotation project database (RAP-DB): 2008 update.</title>
        <authorList>
            <consortium name="The rice annotation project (RAP)"/>
        </authorList>
    </citation>
    <scope>GENOME REANNOTATION</scope>
    <source>
        <strain>cv. Nipponbare</strain>
    </source>
</reference>
<reference key="4">
    <citation type="journal article" date="2013" name="Rice">
        <title>Improvement of the Oryza sativa Nipponbare reference genome using next generation sequence and optical map data.</title>
        <authorList>
            <person name="Kawahara Y."/>
            <person name="de la Bastide M."/>
            <person name="Hamilton J.P."/>
            <person name="Kanamori H."/>
            <person name="McCombie W.R."/>
            <person name="Ouyang S."/>
            <person name="Schwartz D.C."/>
            <person name="Tanaka T."/>
            <person name="Wu J."/>
            <person name="Zhou S."/>
            <person name="Childs K.L."/>
            <person name="Davidson R.M."/>
            <person name="Lin H."/>
            <person name="Quesada-Ocampo L."/>
            <person name="Vaillancourt B."/>
            <person name="Sakai H."/>
            <person name="Lee S.S."/>
            <person name="Kim J."/>
            <person name="Numa H."/>
            <person name="Itoh T."/>
            <person name="Buell C.R."/>
            <person name="Matsumoto T."/>
        </authorList>
    </citation>
    <scope>GENOME REANNOTATION</scope>
    <source>
        <strain>cv. Nipponbare</strain>
    </source>
</reference>
<reference key="5">
    <citation type="journal article" date="2005" name="PLoS Biol.">
        <title>The genomes of Oryza sativa: a history of duplications.</title>
        <authorList>
            <person name="Yu J."/>
            <person name="Wang J."/>
            <person name="Lin W."/>
            <person name="Li S."/>
            <person name="Li H."/>
            <person name="Zhou J."/>
            <person name="Ni P."/>
            <person name="Dong W."/>
            <person name="Hu S."/>
            <person name="Zeng C."/>
            <person name="Zhang J."/>
            <person name="Zhang Y."/>
            <person name="Li R."/>
            <person name="Xu Z."/>
            <person name="Li S."/>
            <person name="Li X."/>
            <person name="Zheng H."/>
            <person name="Cong L."/>
            <person name="Lin L."/>
            <person name="Yin J."/>
            <person name="Geng J."/>
            <person name="Li G."/>
            <person name="Shi J."/>
            <person name="Liu J."/>
            <person name="Lv H."/>
            <person name="Li J."/>
            <person name="Wang J."/>
            <person name="Deng Y."/>
            <person name="Ran L."/>
            <person name="Shi X."/>
            <person name="Wang X."/>
            <person name="Wu Q."/>
            <person name="Li C."/>
            <person name="Ren X."/>
            <person name="Wang J."/>
            <person name="Wang X."/>
            <person name="Li D."/>
            <person name="Liu D."/>
            <person name="Zhang X."/>
            <person name="Ji Z."/>
            <person name="Zhao W."/>
            <person name="Sun Y."/>
            <person name="Zhang Z."/>
            <person name="Bao J."/>
            <person name="Han Y."/>
            <person name="Dong L."/>
            <person name="Ji J."/>
            <person name="Chen P."/>
            <person name="Wu S."/>
            <person name="Liu J."/>
            <person name="Xiao Y."/>
            <person name="Bu D."/>
            <person name="Tan J."/>
            <person name="Yang L."/>
            <person name="Ye C."/>
            <person name="Zhang J."/>
            <person name="Xu J."/>
            <person name="Zhou Y."/>
            <person name="Yu Y."/>
            <person name="Zhang B."/>
            <person name="Zhuang S."/>
            <person name="Wei H."/>
            <person name="Liu B."/>
            <person name="Lei M."/>
            <person name="Yu H."/>
            <person name="Li Y."/>
            <person name="Xu H."/>
            <person name="Wei S."/>
            <person name="He X."/>
            <person name="Fang L."/>
            <person name="Zhang Z."/>
            <person name="Zhang Y."/>
            <person name="Huang X."/>
            <person name="Su Z."/>
            <person name="Tong W."/>
            <person name="Li J."/>
            <person name="Tong Z."/>
            <person name="Li S."/>
            <person name="Ye J."/>
            <person name="Wang L."/>
            <person name="Fang L."/>
            <person name="Lei T."/>
            <person name="Chen C.-S."/>
            <person name="Chen H.-C."/>
            <person name="Xu Z."/>
            <person name="Li H."/>
            <person name="Huang H."/>
            <person name="Zhang F."/>
            <person name="Xu H."/>
            <person name="Li N."/>
            <person name="Zhao C."/>
            <person name="Li S."/>
            <person name="Dong L."/>
            <person name="Huang Y."/>
            <person name="Li L."/>
            <person name="Xi Y."/>
            <person name="Qi Q."/>
            <person name="Li W."/>
            <person name="Zhang B."/>
            <person name="Hu W."/>
            <person name="Zhang Y."/>
            <person name="Tian X."/>
            <person name="Jiao Y."/>
            <person name="Liang X."/>
            <person name="Jin J."/>
            <person name="Gao L."/>
            <person name="Zheng W."/>
            <person name="Hao B."/>
            <person name="Liu S.-M."/>
            <person name="Wang W."/>
            <person name="Yuan L."/>
            <person name="Cao M."/>
            <person name="McDermott J."/>
            <person name="Samudrala R."/>
            <person name="Wang J."/>
            <person name="Wong G.K.-S."/>
            <person name="Yang H."/>
        </authorList>
    </citation>
    <scope>NUCLEOTIDE SEQUENCE [LARGE SCALE GENOMIC DNA]</scope>
    <source>
        <strain>cv. Nipponbare</strain>
    </source>
</reference>
<reference key="6">
    <citation type="journal article" date="2003" name="Science">
        <title>Collection, mapping, and annotation of over 28,000 cDNA clones from japonica rice.</title>
        <authorList>
            <consortium name="The rice full-length cDNA consortium"/>
        </authorList>
    </citation>
    <scope>NUCLEOTIDE SEQUENCE [LARGE SCALE MRNA]</scope>
    <source>
        <strain>cv. Nipponbare</strain>
    </source>
</reference>
<reference key="7">
    <citation type="journal article" date="2006" name="Funct. Integr. Genomics">
        <title>Structure and expression analysis of early auxin-responsive Aux/IAA gene family in rice (Oryza sativa).</title>
        <authorList>
            <person name="Jain M."/>
            <person name="Kaur N."/>
            <person name="Garg R."/>
            <person name="Thakur J.K."/>
            <person name="Tyagi A.K."/>
            <person name="Khurana J.P."/>
        </authorList>
    </citation>
    <scope>NOMENCLATURE</scope>
</reference>